<organism>
    <name type="scientific">Arabidopsis thaliana</name>
    <name type="common">Mouse-ear cress</name>
    <dbReference type="NCBI Taxonomy" id="3702"/>
    <lineage>
        <taxon>Eukaryota</taxon>
        <taxon>Viridiplantae</taxon>
        <taxon>Streptophyta</taxon>
        <taxon>Embryophyta</taxon>
        <taxon>Tracheophyta</taxon>
        <taxon>Spermatophyta</taxon>
        <taxon>Magnoliopsida</taxon>
        <taxon>eudicotyledons</taxon>
        <taxon>Gunneridae</taxon>
        <taxon>Pentapetalae</taxon>
        <taxon>rosids</taxon>
        <taxon>malvids</taxon>
        <taxon>Brassicales</taxon>
        <taxon>Brassicaceae</taxon>
        <taxon>Camelineae</taxon>
        <taxon>Arabidopsis</taxon>
    </lineage>
</organism>
<sequence length="910" mass="102649">MTIPNSDFMIENGVCDFPTTPEEEKRIVSELITESEDNLKEGNLYFVISKRWYTSWEKYVEQSTKEYISGESSEASRPGPIDNHDIIESESDVNDPQLRRLLMERVDYVLVPQEVWKRLVEWYSGGPPIERKLICQGFYTRSYSVEVYPLCLMLTDGRDESRTVIRLGKQASIRELYEKVCALTGVPQEKAHIWDYFDKRKNGLLDSLSYKSLEESSLHMDQDILLEVDGSSSSQSAMSSTGNELALVPLEPSRSSVTIAGGPTLSNGHSTTSNFSLFPRITSEDDGSNSLSILGKGEKGGLAGLSNLGNTCFMNSALQCLAHTPPIVEYFLQDYSDDINRDNPLGMCGELAIAFGDLLKKLWSSGRNSVAPRAFKTKLARFAPQFSGYNQHDSQELLAFLLDGLHEDLNKVKRKPYIELKDSDSRPDDEVAEELWNYHKARNDSVIVDVCQGQYKSTLVCPACGKISITFDPFMYLSVPLPSTLTRSMTVTVFYCDGSHLPMPYTVIVPKNGSIRDLITALGTACLLAEDESLLLAEVYDHKIFKYFENPLDSLSSIKDDEHIVAYRLNQMPKGSGKAKLEILHGGQKRPILESVRGRDVKLFGTPFVTYVNTEPLSGADIDAVLSRFLSPLHKVHAPSKIHNGSENGHLPDATVDEASEILSSPDTEIDDASDRELSFRIFLTDERGLNFKPLQSESSISLGIATRVLVEWNEGEHERYDSSYLSDLPEVHKTSFSAKKTRQESISLFSCLEAFLAEEPLGPDDMWFCPSCKEHRQANKKLDLWKLPDILVFHLKRFTYSRYLKNKIDTFVNFPVHDLDLSKYVKNKNDQSYLYELYAVSNHYGGLGGGHYTAYAKLIDDNEWYHFDDSHVSSVNESEIKNSAAYVLFYRRVRSETETQTVEMSTDMD</sequence>
<accession>Q93Y01</accession>
<accession>Q9T0B8</accession>
<accession>Q9ZSB6</accession>
<feature type="chain" id="PRO_0000313036" description="Ubiquitin carboxyl-terminal hydrolase 9">
    <location>
        <begin position="1"/>
        <end position="910"/>
    </location>
</feature>
<feature type="domain" description="DUSP" evidence="2">
    <location>
        <begin position="19"/>
        <end position="134"/>
    </location>
</feature>
<feature type="domain" description="USP">
    <location>
        <begin position="303"/>
        <end position="894"/>
    </location>
</feature>
<feature type="region of interest" description="Disordered" evidence="5">
    <location>
        <begin position="68"/>
        <end position="89"/>
    </location>
</feature>
<feature type="active site" description="Nucleophile" evidence="3 4">
    <location>
        <position position="312"/>
    </location>
</feature>
<feature type="active site" description="Proton acceptor" evidence="3 4">
    <location>
        <position position="852"/>
    </location>
</feature>
<comment type="function">
    <text evidence="1">Recognizes and hydrolyzes the peptide bond at the C-terminal Gly of ubiquitin. Involved in the processing of poly-ubiquitin precursors as well as that of ubiquitinated proteins (By similarity).</text>
</comment>
<comment type="catalytic activity">
    <reaction>
        <text>Thiol-dependent hydrolysis of ester, thioester, amide, peptide and isopeptide bonds formed by the C-terminal Gly of ubiquitin (a 76-residue protein attached to proteins as an intracellular targeting signal).</text>
        <dbReference type="EC" id="3.4.19.12"/>
    </reaction>
</comment>
<comment type="similarity">
    <text evidence="6">Belongs to the peptidase C19 family.</text>
</comment>
<comment type="sequence caution" evidence="6">
    <conflict type="erroneous gene model prediction">
        <sequence resource="EMBL-CDS" id="AAD03434"/>
    </conflict>
</comment>
<comment type="sequence caution" evidence="6">
    <conflict type="erroneous gene model prediction">
        <sequence resource="EMBL-CDS" id="CAB40025"/>
    </conflict>
</comment>
<comment type="sequence caution" evidence="6">
    <conflict type="erroneous gene model prediction">
        <sequence resource="EMBL-CDS" id="CAB78182"/>
    </conflict>
</comment>
<gene>
    <name type="primary">UBP9</name>
    <name type="ordered locus">At4g10590</name>
    <name type="ORF">F3H7.7</name>
    <name type="ORF">T4F9.50</name>
</gene>
<dbReference type="EC" id="3.4.19.12"/>
<dbReference type="EMBL" id="AF118222">
    <property type="protein sequence ID" value="AAD03434.1"/>
    <property type="status" value="ALT_SEQ"/>
    <property type="molecule type" value="Genomic_DNA"/>
</dbReference>
<dbReference type="EMBL" id="AL049523">
    <property type="protein sequence ID" value="CAB40025.1"/>
    <property type="status" value="ALT_SEQ"/>
    <property type="molecule type" value="Genomic_DNA"/>
</dbReference>
<dbReference type="EMBL" id="AL161517">
    <property type="protein sequence ID" value="CAB78182.1"/>
    <property type="status" value="ALT_SEQ"/>
    <property type="molecule type" value="Genomic_DNA"/>
</dbReference>
<dbReference type="EMBL" id="CP002687">
    <property type="protein sequence ID" value="AEE82901.1"/>
    <property type="molecule type" value="Genomic_DNA"/>
</dbReference>
<dbReference type="EMBL" id="CP002687">
    <property type="protein sequence ID" value="AEE82902.1"/>
    <property type="molecule type" value="Genomic_DNA"/>
</dbReference>
<dbReference type="EMBL" id="CP002687">
    <property type="protein sequence ID" value="ANM66517.1"/>
    <property type="molecule type" value="Genomic_DNA"/>
</dbReference>
<dbReference type="EMBL" id="CP002687">
    <property type="protein sequence ID" value="ANM66518.1"/>
    <property type="molecule type" value="Genomic_DNA"/>
</dbReference>
<dbReference type="EMBL" id="AY054463">
    <property type="protein sequence ID" value="AAK96655.1"/>
    <property type="molecule type" value="mRNA"/>
</dbReference>
<dbReference type="EMBL" id="BT010363">
    <property type="protein sequence ID" value="AAQ56806.1"/>
    <property type="molecule type" value="mRNA"/>
</dbReference>
<dbReference type="PIR" id="T04194">
    <property type="entry name" value="T04194"/>
</dbReference>
<dbReference type="RefSeq" id="NP_001328408.1">
    <property type="nucleotide sequence ID" value="NM_001340677.1"/>
</dbReference>
<dbReference type="RefSeq" id="NP_001328409.1">
    <property type="nucleotide sequence ID" value="NM_001340676.1"/>
</dbReference>
<dbReference type="RefSeq" id="NP_567363.1">
    <property type="nucleotide sequence ID" value="NM_117127.2"/>
</dbReference>
<dbReference type="RefSeq" id="NP_849356.1">
    <property type="nucleotide sequence ID" value="NM_179025.2"/>
</dbReference>
<dbReference type="SMR" id="Q93Y01"/>
<dbReference type="FunCoup" id="Q93Y01">
    <property type="interactions" value="3862"/>
</dbReference>
<dbReference type="STRING" id="3702.Q93Y01"/>
<dbReference type="MEROPS" id="C19.A03"/>
<dbReference type="PaxDb" id="3702-AT4G10590.2"/>
<dbReference type="ProteomicsDB" id="228477"/>
<dbReference type="EnsemblPlants" id="AT4G10590.1">
    <property type="protein sequence ID" value="AT4G10590.1"/>
    <property type="gene ID" value="AT4G10590"/>
</dbReference>
<dbReference type="EnsemblPlants" id="AT4G10590.2">
    <property type="protein sequence ID" value="AT4G10590.2"/>
    <property type="gene ID" value="AT4G10590"/>
</dbReference>
<dbReference type="EnsemblPlants" id="AT4G10590.3">
    <property type="protein sequence ID" value="AT4G10590.3"/>
    <property type="gene ID" value="AT4G10590"/>
</dbReference>
<dbReference type="EnsemblPlants" id="AT4G10590.4">
    <property type="protein sequence ID" value="AT4G10590.4"/>
    <property type="gene ID" value="AT4G10590"/>
</dbReference>
<dbReference type="GeneID" id="826651"/>
<dbReference type="Gramene" id="AT4G10590.1">
    <property type="protein sequence ID" value="AT4G10590.1"/>
    <property type="gene ID" value="AT4G10590"/>
</dbReference>
<dbReference type="Gramene" id="AT4G10590.2">
    <property type="protein sequence ID" value="AT4G10590.2"/>
    <property type="gene ID" value="AT4G10590"/>
</dbReference>
<dbReference type="Gramene" id="AT4G10590.3">
    <property type="protein sequence ID" value="AT4G10590.3"/>
    <property type="gene ID" value="AT4G10590"/>
</dbReference>
<dbReference type="Gramene" id="AT4G10590.4">
    <property type="protein sequence ID" value="AT4G10590.4"/>
    <property type="gene ID" value="AT4G10590"/>
</dbReference>
<dbReference type="KEGG" id="ath:AT4G10590"/>
<dbReference type="Araport" id="AT4G10590"/>
<dbReference type="TAIR" id="AT4G10590">
    <property type="gene designation" value="UBP10"/>
</dbReference>
<dbReference type="eggNOG" id="KOG1870">
    <property type="taxonomic scope" value="Eukaryota"/>
</dbReference>
<dbReference type="HOGENOM" id="CLU_001060_7_1_1"/>
<dbReference type="InParanoid" id="Q93Y01"/>
<dbReference type="OMA" id="NHSRGDQ"/>
<dbReference type="PhylomeDB" id="Q93Y01"/>
<dbReference type="PRO" id="PR:Q93Y01"/>
<dbReference type="Proteomes" id="UP000006548">
    <property type="component" value="Chromosome 4"/>
</dbReference>
<dbReference type="ExpressionAtlas" id="Q93Y01">
    <property type="expression patterns" value="baseline and differential"/>
</dbReference>
<dbReference type="GO" id="GO:0004843">
    <property type="term" value="F:cysteine-type deubiquitinase activity"/>
    <property type="evidence" value="ECO:0007669"/>
    <property type="project" value="UniProtKB-EC"/>
</dbReference>
<dbReference type="GO" id="GO:0016579">
    <property type="term" value="P:protein deubiquitination"/>
    <property type="evidence" value="ECO:0007669"/>
    <property type="project" value="InterPro"/>
</dbReference>
<dbReference type="GO" id="GO:0006508">
    <property type="term" value="P:proteolysis"/>
    <property type="evidence" value="ECO:0007669"/>
    <property type="project" value="UniProtKB-KW"/>
</dbReference>
<dbReference type="CDD" id="cd02674">
    <property type="entry name" value="Peptidase_C19R"/>
    <property type="match status" value="1"/>
</dbReference>
<dbReference type="Gene3D" id="3.90.70.10">
    <property type="entry name" value="Cysteine proteinases"/>
    <property type="match status" value="2"/>
</dbReference>
<dbReference type="Gene3D" id="3.30.2230.10">
    <property type="entry name" value="DUSP-like"/>
    <property type="match status" value="1"/>
</dbReference>
<dbReference type="Gene3D" id="3.10.20.90">
    <property type="entry name" value="Phosphatidylinositol 3-kinase Catalytic Subunit, Chain A, domain 1"/>
    <property type="match status" value="1"/>
</dbReference>
<dbReference type="InterPro" id="IPR035927">
    <property type="entry name" value="DUSP-like_sf"/>
</dbReference>
<dbReference type="InterPro" id="IPR038765">
    <property type="entry name" value="Papain-like_cys_pep_sf"/>
</dbReference>
<dbReference type="InterPro" id="IPR006615">
    <property type="entry name" value="Pept_C19_DUSP"/>
</dbReference>
<dbReference type="InterPro" id="IPR001394">
    <property type="entry name" value="Peptidase_C19_UCH"/>
</dbReference>
<dbReference type="InterPro" id="IPR050185">
    <property type="entry name" value="Ub_carboxyl-term_hydrolase"/>
</dbReference>
<dbReference type="InterPro" id="IPR018200">
    <property type="entry name" value="USP_CS"/>
</dbReference>
<dbReference type="InterPro" id="IPR028889">
    <property type="entry name" value="USP_dom"/>
</dbReference>
<dbReference type="PANTHER" id="PTHR21646">
    <property type="entry name" value="UBIQUITIN CARBOXYL-TERMINAL HYDROLASE"/>
    <property type="match status" value="1"/>
</dbReference>
<dbReference type="PANTHER" id="PTHR21646:SF46">
    <property type="entry name" value="UBIQUITIN CARBOXYL-TERMINAL HYDROLASE"/>
    <property type="match status" value="1"/>
</dbReference>
<dbReference type="Pfam" id="PF06337">
    <property type="entry name" value="DUSP"/>
    <property type="match status" value="1"/>
</dbReference>
<dbReference type="Pfam" id="PF00443">
    <property type="entry name" value="UCH"/>
    <property type="match status" value="1"/>
</dbReference>
<dbReference type="SMART" id="SM00695">
    <property type="entry name" value="DUSP"/>
    <property type="match status" value="1"/>
</dbReference>
<dbReference type="SUPFAM" id="SSF54001">
    <property type="entry name" value="Cysteine proteinases"/>
    <property type="match status" value="1"/>
</dbReference>
<dbReference type="SUPFAM" id="SSF143791">
    <property type="entry name" value="DUSP-like"/>
    <property type="match status" value="1"/>
</dbReference>
<dbReference type="PROSITE" id="PS51283">
    <property type="entry name" value="DUSP"/>
    <property type="match status" value="1"/>
</dbReference>
<dbReference type="PROSITE" id="PS00972">
    <property type="entry name" value="USP_1"/>
    <property type="match status" value="1"/>
</dbReference>
<dbReference type="PROSITE" id="PS00973">
    <property type="entry name" value="USP_2"/>
    <property type="match status" value="1"/>
</dbReference>
<dbReference type="PROSITE" id="PS50235">
    <property type="entry name" value="USP_3"/>
    <property type="match status" value="1"/>
</dbReference>
<reference key="1">
    <citation type="journal article" date="1999" name="Nature">
        <title>Sequence and analysis of chromosome 4 of the plant Arabidopsis thaliana.</title>
        <authorList>
            <person name="Mayer K.F.X."/>
            <person name="Schueller C."/>
            <person name="Wambutt R."/>
            <person name="Murphy G."/>
            <person name="Volckaert G."/>
            <person name="Pohl T."/>
            <person name="Duesterhoeft A."/>
            <person name="Stiekema W."/>
            <person name="Entian K.-D."/>
            <person name="Terryn N."/>
            <person name="Harris B."/>
            <person name="Ansorge W."/>
            <person name="Brandt P."/>
            <person name="Grivell L.A."/>
            <person name="Rieger M."/>
            <person name="Weichselgartner M."/>
            <person name="de Simone V."/>
            <person name="Obermaier B."/>
            <person name="Mache R."/>
            <person name="Mueller M."/>
            <person name="Kreis M."/>
            <person name="Delseny M."/>
            <person name="Puigdomenech P."/>
            <person name="Watson M."/>
            <person name="Schmidtheini T."/>
            <person name="Reichert B."/>
            <person name="Portetelle D."/>
            <person name="Perez-Alonso M."/>
            <person name="Boutry M."/>
            <person name="Bancroft I."/>
            <person name="Vos P."/>
            <person name="Hoheisel J."/>
            <person name="Zimmermann W."/>
            <person name="Wedler H."/>
            <person name="Ridley P."/>
            <person name="Langham S.-A."/>
            <person name="McCullagh B."/>
            <person name="Bilham L."/>
            <person name="Robben J."/>
            <person name="van der Schueren J."/>
            <person name="Grymonprez B."/>
            <person name="Chuang Y.-J."/>
            <person name="Vandenbussche F."/>
            <person name="Braeken M."/>
            <person name="Weltjens I."/>
            <person name="Voet M."/>
            <person name="Bastiaens I."/>
            <person name="Aert R."/>
            <person name="Defoor E."/>
            <person name="Weitzenegger T."/>
            <person name="Bothe G."/>
            <person name="Ramsperger U."/>
            <person name="Hilbert H."/>
            <person name="Braun M."/>
            <person name="Holzer E."/>
            <person name="Brandt A."/>
            <person name="Peters S."/>
            <person name="van Staveren M."/>
            <person name="Dirkse W."/>
            <person name="Mooijman P."/>
            <person name="Klein Lankhorst R."/>
            <person name="Rose M."/>
            <person name="Hauf J."/>
            <person name="Koetter P."/>
            <person name="Berneiser S."/>
            <person name="Hempel S."/>
            <person name="Feldpausch M."/>
            <person name="Lamberth S."/>
            <person name="Van den Daele H."/>
            <person name="De Keyser A."/>
            <person name="Buysshaert C."/>
            <person name="Gielen J."/>
            <person name="Villarroel R."/>
            <person name="De Clercq R."/>
            <person name="van Montagu M."/>
            <person name="Rogers J."/>
            <person name="Cronin A."/>
            <person name="Quail M.A."/>
            <person name="Bray-Allen S."/>
            <person name="Clark L."/>
            <person name="Doggett J."/>
            <person name="Hall S."/>
            <person name="Kay M."/>
            <person name="Lennard N."/>
            <person name="McLay K."/>
            <person name="Mayes R."/>
            <person name="Pettett A."/>
            <person name="Rajandream M.A."/>
            <person name="Lyne M."/>
            <person name="Benes V."/>
            <person name="Rechmann S."/>
            <person name="Borkova D."/>
            <person name="Bloecker H."/>
            <person name="Scharfe M."/>
            <person name="Grimm M."/>
            <person name="Loehnert T.-H."/>
            <person name="Dose S."/>
            <person name="de Haan M."/>
            <person name="Maarse A.C."/>
            <person name="Schaefer M."/>
            <person name="Mueller-Auer S."/>
            <person name="Gabel C."/>
            <person name="Fuchs M."/>
            <person name="Fartmann B."/>
            <person name="Granderath K."/>
            <person name="Dauner D."/>
            <person name="Herzl A."/>
            <person name="Neumann S."/>
            <person name="Argiriou A."/>
            <person name="Vitale D."/>
            <person name="Liguori R."/>
            <person name="Piravandi E."/>
            <person name="Massenet O."/>
            <person name="Quigley F."/>
            <person name="Clabauld G."/>
            <person name="Muendlein A."/>
            <person name="Felber R."/>
            <person name="Schnabl S."/>
            <person name="Hiller R."/>
            <person name="Schmidt W."/>
            <person name="Lecharny A."/>
            <person name="Aubourg S."/>
            <person name="Chefdor F."/>
            <person name="Cooke R."/>
            <person name="Berger C."/>
            <person name="Monfort A."/>
            <person name="Casacuberta E."/>
            <person name="Gibbons T."/>
            <person name="Weber N."/>
            <person name="Vandenbol M."/>
            <person name="Bargues M."/>
            <person name="Terol J."/>
            <person name="Torres A."/>
            <person name="Perez-Perez A."/>
            <person name="Purnelle B."/>
            <person name="Bent E."/>
            <person name="Johnson S."/>
            <person name="Tacon D."/>
            <person name="Jesse T."/>
            <person name="Heijnen L."/>
            <person name="Schwarz S."/>
            <person name="Scholler P."/>
            <person name="Heber S."/>
            <person name="Francs P."/>
            <person name="Bielke C."/>
            <person name="Frishman D."/>
            <person name="Haase D."/>
            <person name="Lemcke K."/>
            <person name="Mewes H.-W."/>
            <person name="Stocker S."/>
            <person name="Zaccaria P."/>
            <person name="Bevan M."/>
            <person name="Wilson R.K."/>
            <person name="de la Bastide M."/>
            <person name="Habermann K."/>
            <person name="Parnell L."/>
            <person name="Dedhia N."/>
            <person name="Gnoj L."/>
            <person name="Schutz K."/>
            <person name="Huang E."/>
            <person name="Spiegel L."/>
            <person name="Sekhon M."/>
            <person name="Murray J."/>
            <person name="Sheet P."/>
            <person name="Cordes M."/>
            <person name="Abu-Threideh J."/>
            <person name="Stoneking T."/>
            <person name="Kalicki J."/>
            <person name="Graves T."/>
            <person name="Harmon G."/>
            <person name="Edwards J."/>
            <person name="Latreille P."/>
            <person name="Courtney L."/>
            <person name="Cloud J."/>
            <person name="Abbott A."/>
            <person name="Scott K."/>
            <person name="Johnson D."/>
            <person name="Minx P."/>
            <person name="Bentley D."/>
            <person name="Fulton B."/>
            <person name="Miller N."/>
            <person name="Greco T."/>
            <person name="Kemp K."/>
            <person name="Kramer J."/>
            <person name="Fulton L."/>
            <person name="Mardis E."/>
            <person name="Dante M."/>
            <person name="Pepin K."/>
            <person name="Hillier L.W."/>
            <person name="Nelson J."/>
            <person name="Spieth J."/>
            <person name="Ryan E."/>
            <person name="Andrews S."/>
            <person name="Geisel C."/>
            <person name="Layman D."/>
            <person name="Du H."/>
            <person name="Ali J."/>
            <person name="Berghoff A."/>
            <person name="Jones K."/>
            <person name="Drone K."/>
            <person name="Cotton M."/>
            <person name="Joshu C."/>
            <person name="Antonoiu B."/>
            <person name="Zidanic M."/>
            <person name="Strong C."/>
            <person name="Sun H."/>
            <person name="Lamar B."/>
            <person name="Yordan C."/>
            <person name="Ma P."/>
            <person name="Zhong J."/>
            <person name="Preston R."/>
            <person name="Vil D."/>
            <person name="Shekher M."/>
            <person name="Matero A."/>
            <person name="Shah R."/>
            <person name="Swaby I.K."/>
            <person name="O'Shaughnessy A."/>
            <person name="Rodriguez M."/>
            <person name="Hoffman J."/>
            <person name="Till S."/>
            <person name="Granat S."/>
            <person name="Shohdy N."/>
            <person name="Hasegawa A."/>
            <person name="Hameed A."/>
            <person name="Lodhi M."/>
            <person name="Johnson A."/>
            <person name="Chen E."/>
            <person name="Marra M.A."/>
            <person name="Martienssen R."/>
            <person name="McCombie W.R."/>
        </authorList>
    </citation>
    <scope>NUCLEOTIDE SEQUENCE [LARGE SCALE GENOMIC DNA]</scope>
    <source>
        <strain>cv. Columbia</strain>
    </source>
</reference>
<reference key="2">
    <citation type="journal article" date="2017" name="Plant J.">
        <title>Araport11: a complete reannotation of the Arabidopsis thaliana reference genome.</title>
        <authorList>
            <person name="Cheng C.Y."/>
            <person name="Krishnakumar V."/>
            <person name="Chan A.P."/>
            <person name="Thibaud-Nissen F."/>
            <person name="Schobel S."/>
            <person name="Town C.D."/>
        </authorList>
    </citation>
    <scope>GENOME REANNOTATION</scope>
    <source>
        <strain>cv. Columbia</strain>
    </source>
</reference>
<reference key="3">
    <citation type="journal article" date="2003" name="Science">
        <title>Empirical analysis of transcriptional activity in the Arabidopsis genome.</title>
        <authorList>
            <person name="Yamada K."/>
            <person name="Lim J."/>
            <person name="Dale J.M."/>
            <person name="Chen H."/>
            <person name="Shinn P."/>
            <person name="Palm C.J."/>
            <person name="Southwick A.M."/>
            <person name="Wu H.C."/>
            <person name="Kim C.J."/>
            <person name="Nguyen M."/>
            <person name="Pham P.K."/>
            <person name="Cheuk R.F."/>
            <person name="Karlin-Newmann G."/>
            <person name="Liu S.X."/>
            <person name="Lam B."/>
            <person name="Sakano H."/>
            <person name="Wu T."/>
            <person name="Yu G."/>
            <person name="Miranda M."/>
            <person name="Quach H.L."/>
            <person name="Tripp M."/>
            <person name="Chang C.H."/>
            <person name="Lee J.M."/>
            <person name="Toriumi M.J."/>
            <person name="Chan M.M."/>
            <person name="Tang C.C."/>
            <person name="Onodera C.S."/>
            <person name="Deng J.M."/>
            <person name="Akiyama K."/>
            <person name="Ansari Y."/>
            <person name="Arakawa T."/>
            <person name="Banh J."/>
            <person name="Banno F."/>
            <person name="Bowser L."/>
            <person name="Brooks S.Y."/>
            <person name="Carninci P."/>
            <person name="Chao Q."/>
            <person name="Choy N."/>
            <person name="Enju A."/>
            <person name="Goldsmith A.D."/>
            <person name="Gurjal M."/>
            <person name="Hansen N.F."/>
            <person name="Hayashizaki Y."/>
            <person name="Johnson-Hopson C."/>
            <person name="Hsuan V.W."/>
            <person name="Iida K."/>
            <person name="Karnes M."/>
            <person name="Khan S."/>
            <person name="Koesema E."/>
            <person name="Ishida J."/>
            <person name="Jiang P.X."/>
            <person name="Jones T."/>
            <person name="Kawai J."/>
            <person name="Kamiya A."/>
            <person name="Meyers C."/>
            <person name="Nakajima M."/>
            <person name="Narusaka M."/>
            <person name="Seki M."/>
            <person name="Sakurai T."/>
            <person name="Satou M."/>
            <person name="Tamse R."/>
            <person name="Vaysberg M."/>
            <person name="Wallender E.K."/>
            <person name="Wong C."/>
            <person name="Yamamura Y."/>
            <person name="Yuan S."/>
            <person name="Shinozaki K."/>
            <person name="Davis R.W."/>
            <person name="Theologis A."/>
            <person name="Ecker J.R."/>
        </authorList>
    </citation>
    <scope>NUCLEOTIDE SEQUENCE [LARGE SCALE MRNA]</scope>
    <source>
        <strain>cv. Columbia</strain>
    </source>
</reference>
<reference key="4">
    <citation type="journal article" date="2000" name="Plant Physiol.">
        <title>The ubiquitin-specific protease family from Arabidopsis. AtUBP1 and 2 are required for the resistance to the amino acid analog canavanine.</title>
        <authorList>
            <person name="Yan N."/>
            <person name="Doelling J.H."/>
            <person name="Falbel T.G."/>
            <person name="Durski A.M."/>
            <person name="Vierstra R.D."/>
        </authorList>
    </citation>
    <scope>GENE FAMILY ORGANIZATION</scope>
    <scope>NOMENCLATURE</scope>
</reference>
<protein>
    <recommendedName>
        <fullName>Ubiquitin carboxyl-terminal hydrolase 9</fullName>
        <ecNumber>3.4.19.12</ecNumber>
    </recommendedName>
    <alternativeName>
        <fullName>Deubiquitinating enzyme 9</fullName>
        <shortName>AtUBP9</shortName>
    </alternativeName>
    <alternativeName>
        <fullName>Ubiquitin thioesterase 9</fullName>
    </alternativeName>
    <alternativeName>
        <fullName>Ubiquitin-specific-processing protease 9</fullName>
    </alternativeName>
</protein>
<evidence type="ECO:0000250" key="1"/>
<evidence type="ECO:0000255" key="2">
    <source>
        <dbReference type="PROSITE-ProRule" id="PRU00613"/>
    </source>
</evidence>
<evidence type="ECO:0000255" key="3">
    <source>
        <dbReference type="PROSITE-ProRule" id="PRU10092"/>
    </source>
</evidence>
<evidence type="ECO:0000255" key="4">
    <source>
        <dbReference type="PROSITE-ProRule" id="PRU10093"/>
    </source>
</evidence>
<evidence type="ECO:0000256" key="5">
    <source>
        <dbReference type="SAM" id="MobiDB-lite"/>
    </source>
</evidence>
<evidence type="ECO:0000305" key="6"/>
<keyword id="KW-0378">Hydrolase</keyword>
<keyword id="KW-0645">Protease</keyword>
<keyword id="KW-1185">Reference proteome</keyword>
<keyword id="KW-0788">Thiol protease</keyword>
<keyword id="KW-0833">Ubl conjugation pathway</keyword>
<name>UBP9_ARATH</name>
<proteinExistence type="evidence at transcript level"/>